<dbReference type="EMBL" id="CP000939">
    <property type="protein sequence ID" value="ACA45920.1"/>
    <property type="molecule type" value="Genomic_DNA"/>
</dbReference>
<dbReference type="RefSeq" id="WP_003359319.1">
    <property type="nucleotide sequence ID" value="NC_010516.1"/>
</dbReference>
<dbReference type="SMR" id="B1IH03"/>
<dbReference type="GeneID" id="92940335"/>
<dbReference type="KEGG" id="cbb:CLD_0937"/>
<dbReference type="HOGENOM" id="CLU_103669_2_1_9"/>
<dbReference type="Proteomes" id="UP000008541">
    <property type="component" value="Chromosome"/>
</dbReference>
<dbReference type="GO" id="GO:0000917">
    <property type="term" value="P:division septum assembly"/>
    <property type="evidence" value="ECO:0007669"/>
    <property type="project" value="UniProtKB-KW"/>
</dbReference>
<dbReference type="GO" id="GO:0030435">
    <property type="term" value="P:sporulation resulting in formation of a cellular spore"/>
    <property type="evidence" value="ECO:0007669"/>
    <property type="project" value="InterPro"/>
</dbReference>
<dbReference type="Gene3D" id="3.30.1120.40">
    <property type="entry name" value="Stage V sporulation protein G"/>
    <property type="match status" value="1"/>
</dbReference>
<dbReference type="HAMAP" id="MF_00819">
    <property type="entry name" value="SpoVG"/>
    <property type="match status" value="1"/>
</dbReference>
<dbReference type="InterPro" id="IPR007170">
    <property type="entry name" value="SpoVG"/>
</dbReference>
<dbReference type="InterPro" id="IPR036751">
    <property type="entry name" value="SpoVG_sf"/>
</dbReference>
<dbReference type="NCBIfam" id="NF009749">
    <property type="entry name" value="PRK13259.1"/>
    <property type="match status" value="1"/>
</dbReference>
<dbReference type="PANTHER" id="PTHR38429">
    <property type="entry name" value="SEPTATION PROTEIN SPOVG-RELATED"/>
    <property type="match status" value="1"/>
</dbReference>
<dbReference type="PANTHER" id="PTHR38429:SF1">
    <property type="entry name" value="SEPTATION PROTEIN SPOVG-RELATED"/>
    <property type="match status" value="1"/>
</dbReference>
<dbReference type="Pfam" id="PF04026">
    <property type="entry name" value="SpoVG"/>
    <property type="match status" value="1"/>
</dbReference>
<dbReference type="SUPFAM" id="SSF160537">
    <property type="entry name" value="SpoVG-like"/>
    <property type="match status" value="1"/>
</dbReference>
<gene>
    <name evidence="1" type="primary">spoVG</name>
    <name type="ordered locus">CLD_0937</name>
</gene>
<protein>
    <recommendedName>
        <fullName evidence="1">Putative septation protein SpoVG</fullName>
    </recommendedName>
</protein>
<keyword id="KW-0131">Cell cycle</keyword>
<keyword id="KW-0132">Cell division</keyword>
<keyword id="KW-0717">Septation</keyword>
<evidence type="ECO:0000255" key="1">
    <source>
        <dbReference type="HAMAP-Rule" id="MF_00819"/>
    </source>
</evidence>
<accession>B1IH03</accession>
<comment type="function">
    <text evidence="1">Could be involved in septation.</text>
</comment>
<comment type="similarity">
    <text evidence="1">Belongs to the SpoVG family.</text>
</comment>
<reference key="1">
    <citation type="journal article" date="2007" name="PLoS ONE">
        <title>Analysis of the neurotoxin complex genes in Clostridium botulinum A1-A4 and B1 strains: BoNT/A3, /Ba4 and /B1 clusters are located within plasmids.</title>
        <authorList>
            <person name="Smith T.J."/>
            <person name="Hill K.K."/>
            <person name="Foley B.T."/>
            <person name="Detter J.C."/>
            <person name="Munk A.C."/>
            <person name="Bruce D.C."/>
            <person name="Doggett N.A."/>
            <person name="Smith L.A."/>
            <person name="Marks J.D."/>
            <person name="Xie G."/>
            <person name="Brettin T.S."/>
        </authorList>
    </citation>
    <scope>NUCLEOTIDE SEQUENCE [LARGE SCALE GENOMIC DNA]</scope>
    <source>
        <strain>Okra / Type B1</strain>
    </source>
</reference>
<proteinExistence type="inferred from homology"/>
<organism>
    <name type="scientific">Clostridium botulinum (strain Okra / Type B1)</name>
    <dbReference type="NCBI Taxonomy" id="498213"/>
    <lineage>
        <taxon>Bacteria</taxon>
        <taxon>Bacillati</taxon>
        <taxon>Bacillota</taxon>
        <taxon>Clostridia</taxon>
        <taxon>Eubacteriales</taxon>
        <taxon>Clostridiaceae</taxon>
        <taxon>Clostridium</taxon>
    </lineage>
</organism>
<feature type="chain" id="PRO_1000196499" description="Putative septation protein SpoVG">
    <location>
        <begin position="1"/>
        <end position="95"/>
    </location>
</feature>
<sequence>MQITDVRVRKIAAEGKMKAIVSVTFDNEFVVHDIKVIEGQNGLFIAMPSRKTPDGEYKDIAHPINTETREKIQKSIIEEYERAKMEEESSEKVQE</sequence>
<name>SP5G_CLOBK</name>